<feature type="chain" id="PRO_0000380028" description="Undecaprenyl phosphate-alpha-4-amino-4-deoxy-L-arabinose arabinosyl transferase">
    <location>
        <begin position="1"/>
        <end position="548"/>
    </location>
</feature>
<feature type="transmembrane region" description="Helical" evidence="1">
    <location>
        <begin position="9"/>
        <end position="29"/>
    </location>
</feature>
<feature type="transmembrane region" description="Helical" evidence="1">
    <location>
        <begin position="82"/>
        <end position="102"/>
    </location>
</feature>
<feature type="transmembrane region" description="Helical" evidence="1">
    <location>
        <begin position="114"/>
        <end position="134"/>
    </location>
</feature>
<feature type="transmembrane region" description="Helical" evidence="1">
    <location>
        <begin position="137"/>
        <end position="157"/>
    </location>
</feature>
<feature type="transmembrane region" description="Helical" evidence="1">
    <location>
        <begin position="163"/>
        <end position="185"/>
    </location>
</feature>
<feature type="transmembrane region" description="Helical" evidence="1">
    <location>
        <begin position="205"/>
        <end position="225"/>
    </location>
</feature>
<feature type="transmembrane region" description="Helical" evidence="1">
    <location>
        <begin position="256"/>
        <end position="276"/>
    </location>
</feature>
<feature type="transmembrane region" description="Helical" evidence="1">
    <location>
        <begin position="289"/>
        <end position="309"/>
    </location>
</feature>
<feature type="transmembrane region" description="Helical" evidence="1">
    <location>
        <begin position="311"/>
        <end position="331"/>
    </location>
</feature>
<feature type="transmembrane region" description="Helical" evidence="1">
    <location>
        <begin position="345"/>
        <end position="365"/>
    </location>
</feature>
<feature type="transmembrane region" description="Helical" evidence="1">
    <location>
        <begin position="381"/>
        <end position="401"/>
    </location>
</feature>
<feature type="transmembrane region" description="Helical" evidence="1">
    <location>
        <begin position="404"/>
        <end position="424"/>
    </location>
</feature>
<evidence type="ECO:0000255" key="1">
    <source>
        <dbReference type="HAMAP-Rule" id="MF_01165"/>
    </source>
</evidence>
<organism>
    <name type="scientific">Salmonella gallinarum (strain 287/91 / NCTC 13346)</name>
    <dbReference type="NCBI Taxonomy" id="550538"/>
    <lineage>
        <taxon>Bacteria</taxon>
        <taxon>Pseudomonadati</taxon>
        <taxon>Pseudomonadota</taxon>
        <taxon>Gammaproteobacteria</taxon>
        <taxon>Enterobacterales</taxon>
        <taxon>Enterobacteriaceae</taxon>
        <taxon>Salmonella</taxon>
    </lineage>
</organism>
<comment type="function">
    <text evidence="1">Catalyzes the transfer of the L-Ara4N moiety of the glycolipid undecaprenyl phosphate-alpha-L-Ara4N to lipid A. The modified arabinose is attached to lipid A and is required for resistance to polymyxin and cationic antimicrobial peptides.</text>
</comment>
<comment type="catalytic activity">
    <reaction evidence="1">
        <text>4-amino-4-deoxy-alpha-L-arabinopyranosyl di-trans,octa-cis-undecaprenyl phosphate + lipid IVA = lipid IIA + di-trans,octa-cis-undecaprenyl phosphate.</text>
        <dbReference type="EC" id="2.4.2.43"/>
    </reaction>
</comment>
<comment type="pathway">
    <text evidence="1">Lipopolysaccharide metabolism; 4-amino-4-deoxy-beta-L-arabinose-lipid A biosynthesis.</text>
</comment>
<comment type="subcellular location">
    <subcellularLocation>
        <location evidence="1">Cell inner membrane</location>
        <topology evidence="1">Multi-pass membrane protein</topology>
    </subcellularLocation>
</comment>
<comment type="similarity">
    <text evidence="1">Belongs to the glycosyltransferase 83 family.</text>
</comment>
<accession>B5RCC6</accession>
<keyword id="KW-0997">Cell inner membrane</keyword>
<keyword id="KW-1003">Cell membrane</keyword>
<keyword id="KW-0328">Glycosyltransferase</keyword>
<keyword id="KW-0441">Lipid A biosynthesis</keyword>
<keyword id="KW-0444">Lipid biosynthesis</keyword>
<keyword id="KW-0443">Lipid metabolism</keyword>
<keyword id="KW-0448">Lipopolysaccharide biosynthesis</keyword>
<keyword id="KW-0472">Membrane</keyword>
<keyword id="KW-0808">Transferase</keyword>
<keyword id="KW-0812">Transmembrane</keyword>
<keyword id="KW-1133">Transmembrane helix</keyword>
<name>ARNT_SALG2</name>
<protein>
    <recommendedName>
        <fullName evidence="1">Undecaprenyl phosphate-alpha-4-amino-4-deoxy-L-arabinose arabinosyl transferase</fullName>
        <ecNumber evidence="1">2.4.2.43</ecNumber>
    </recommendedName>
    <alternativeName>
        <fullName evidence="1">4-amino-4-deoxy-L-arabinose lipid A transferase</fullName>
    </alternativeName>
    <alternativeName>
        <fullName evidence="1">Lipid IV(A) 4-amino-4-deoxy-L-arabinosyltransferase</fullName>
    </alternativeName>
    <alternativeName>
        <fullName evidence="1">Undecaprenyl phosphate-alpha-L-Ara4N transferase</fullName>
    </alternativeName>
</protein>
<reference key="1">
    <citation type="journal article" date="2008" name="Genome Res.">
        <title>Comparative genome analysis of Salmonella enteritidis PT4 and Salmonella gallinarum 287/91 provides insights into evolutionary and host adaptation pathways.</title>
        <authorList>
            <person name="Thomson N.R."/>
            <person name="Clayton D.J."/>
            <person name="Windhorst D."/>
            <person name="Vernikos G."/>
            <person name="Davidson S."/>
            <person name="Churcher C."/>
            <person name="Quail M.A."/>
            <person name="Stevens M."/>
            <person name="Jones M.A."/>
            <person name="Watson M."/>
            <person name="Barron A."/>
            <person name="Layton A."/>
            <person name="Pickard D."/>
            <person name="Kingsley R.A."/>
            <person name="Bignell A."/>
            <person name="Clark L."/>
            <person name="Harris B."/>
            <person name="Ormond D."/>
            <person name="Abdellah Z."/>
            <person name="Brooks K."/>
            <person name="Cherevach I."/>
            <person name="Chillingworth T."/>
            <person name="Woodward J."/>
            <person name="Norberczak H."/>
            <person name="Lord A."/>
            <person name="Arrowsmith C."/>
            <person name="Jagels K."/>
            <person name="Moule S."/>
            <person name="Mungall K."/>
            <person name="Saunders M."/>
            <person name="Whitehead S."/>
            <person name="Chabalgoity J.A."/>
            <person name="Maskell D."/>
            <person name="Humphreys T."/>
            <person name="Roberts M."/>
            <person name="Barrow P.A."/>
            <person name="Dougan G."/>
            <person name="Parkhill J."/>
        </authorList>
    </citation>
    <scope>NUCLEOTIDE SEQUENCE [LARGE SCALE GENOMIC DNA]</scope>
    <source>
        <strain>287/91 / NCTC 13346</strain>
    </source>
</reference>
<proteinExistence type="inferred from homology"/>
<dbReference type="EC" id="2.4.2.43" evidence="1"/>
<dbReference type="EMBL" id="AM933173">
    <property type="protein sequence ID" value="CAR38160.1"/>
    <property type="molecule type" value="Genomic_DNA"/>
</dbReference>
<dbReference type="RefSeq" id="WP_000978052.1">
    <property type="nucleotide sequence ID" value="NC_011274.1"/>
</dbReference>
<dbReference type="SMR" id="B5RCC6"/>
<dbReference type="CAZy" id="GT83">
    <property type="family name" value="Glycosyltransferase Family 83"/>
</dbReference>
<dbReference type="KEGG" id="seg:SG2330"/>
<dbReference type="HOGENOM" id="CLU_019200_2_1_6"/>
<dbReference type="UniPathway" id="UPA00037"/>
<dbReference type="Proteomes" id="UP000008321">
    <property type="component" value="Chromosome"/>
</dbReference>
<dbReference type="GO" id="GO:0005886">
    <property type="term" value="C:plasma membrane"/>
    <property type="evidence" value="ECO:0007669"/>
    <property type="project" value="UniProtKB-SubCell"/>
</dbReference>
<dbReference type="GO" id="GO:0103015">
    <property type="term" value="F:4-amino-4-deoxy-L-arabinose transferase activity"/>
    <property type="evidence" value="ECO:0007669"/>
    <property type="project" value="UniProtKB-EC"/>
</dbReference>
<dbReference type="GO" id="GO:0000030">
    <property type="term" value="F:mannosyltransferase activity"/>
    <property type="evidence" value="ECO:0007669"/>
    <property type="project" value="InterPro"/>
</dbReference>
<dbReference type="GO" id="GO:0009245">
    <property type="term" value="P:lipid A biosynthetic process"/>
    <property type="evidence" value="ECO:0007669"/>
    <property type="project" value="UniProtKB-UniRule"/>
</dbReference>
<dbReference type="GO" id="GO:0009103">
    <property type="term" value="P:lipopolysaccharide biosynthetic process"/>
    <property type="evidence" value="ECO:0007669"/>
    <property type="project" value="UniProtKB-KW"/>
</dbReference>
<dbReference type="GO" id="GO:0006493">
    <property type="term" value="P:protein O-linked glycosylation"/>
    <property type="evidence" value="ECO:0007669"/>
    <property type="project" value="InterPro"/>
</dbReference>
<dbReference type="GO" id="GO:0010041">
    <property type="term" value="P:response to iron(III) ion"/>
    <property type="evidence" value="ECO:0007669"/>
    <property type="project" value="TreeGrafter"/>
</dbReference>
<dbReference type="HAMAP" id="MF_01165">
    <property type="entry name" value="ArnT_transfer"/>
    <property type="match status" value="1"/>
</dbReference>
<dbReference type="InterPro" id="IPR022839">
    <property type="entry name" value="ArnT_tfrase"/>
</dbReference>
<dbReference type="InterPro" id="IPR003342">
    <property type="entry name" value="Glyco_trans_39/83"/>
</dbReference>
<dbReference type="InterPro" id="IPR050297">
    <property type="entry name" value="LipidA_mod_glycosyltrf_83"/>
</dbReference>
<dbReference type="NCBIfam" id="NF009784">
    <property type="entry name" value="PRK13279.1"/>
    <property type="match status" value="1"/>
</dbReference>
<dbReference type="PANTHER" id="PTHR33908">
    <property type="entry name" value="MANNOSYLTRANSFERASE YKCB-RELATED"/>
    <property type="match status" value="1"/>
</dbReference>
<dbReference type="PANTHER" id="PTHR33908:SF3">
    <property type="entry name" value="UNDECAPRENYL PHOSPHATE-ALPHA-4-AMINO-4-DEOXY-L-ARABINOSE ARABINOSYL TRANSFERASE"/>
    <property type="match status" value="1"/>
</dbReference>
<dbReference type="Pfam" id="PF02366">
    <property type="entry name" value="PMT"/>
    <property type="match status" value="1"/>
</dbReference>
<gene>
    <name evidence="1" type="primary">arnT</name>
    <name type="ordered locus">SG2330</name>
</gene>
<sequence length="548" mass="61791">MMKSIRYYLAFAAFIALYYVIPVNSRLLWQPDETRYAEISREMLASGDWIVPHFLGLRYFEKPIAGYWINSLGQWLFGATNFGVRAGAILTTLLAAALVAWLTFRLWRDKRTALLASVIFLSLFAVYSIGTYAVLDPMIALWLTAGMCCFWQGMQATTRTGKIGMFLLLGATCGLGVLTKGFLALAVPVVSVLPWVIVQKRWKDFLLYGWLAVLSCFVVVLPWAIAIARREADFWHYFFWVEHIQRFAMSDAQHKAPFWYYLPVLLAGSLPWLGLLPGALKLGWRERNGAFYLLGWTIMPLLFFSIAKGKLPTYVLSCFAPIAILMARFVLHNVKEGVAALRVNGGINLVFGIIGIVAAFVVSSWGPLKSPVWTHIETYKVFCVWGVFTVWAFVGWYSLCHSQQYLLPAFCPLGLALLFGFSIPDRVMESKQPQFFVEMTQAPLASSRYILADNVGVAAGLAWSLKRDDIMLYGHAGELRYGLSYPDVQDKFVKADDFNAWLNQHRQEGIITLVLSIAKDEDISALSLPPADNVDYQGRLVLIQYRPK</sequence>